<sequence length="238" mass="27328">MIYKSIAERLRIRLNSADFTLNSLLPGEKKLAEEFAVSRMTIRKAIDLLVAWGLVVRRHGSGTYLVRKDVLHQTASLTGLVEVLKRQGKTVTSQVLIFEIMPAPPAIASQLRIQINEQIYFSRRVRFVEGKPLMLEDSYMPVKLFRNLSLQHLEGSKFEYIEQECGILIGGNYESLTPVLADRLLARQMKVAEHTPLLRITSLSYSESGEFLNYSVMFRNASEYQVEYHLRRLHPEKS</sequence>
<name>YIDP_ECOLI</name>
<gene>
    <name type="primary">yidP</name>
    <name type="ordered locus">b3684</name>
    <name type="ordered locus">JW3661</name>
</gene>
<protein>
    <recommendedName>
        <fullName>Uncharacterized HTH-type transcriptional regulator YidP</fullName>
    </recommendedName>
</protein>
<proteinExistence type="predicted"/>
<dbReference type="EMBL" id="L10328">
    <property type="protein sequence ID" value="AAA62036.1"/>
    <property type="molecule type" value="Genomic_DNA"/>
</dbReference>
<dbReference type="EMBL" id="U00096">
    <property type="protein sequence ID" value="AAC76707.1"/>
    <property type="molecule type" value="Genomic_DNA"/>
</dbReference>
<dbReference type="EMBL" id="AP009048">
    <property type="protein sequence ID" value="BAE77610.1"/>
    <property type="molecule type" value="Genomic_DNA"/>
</dbReference>
<dbReference type="PIR" id="E65170">
    <property type="entry name" value="E65170"/>
</dbReference>
<dbReference type="RefSeq" id="NP_418139.1">
    <property type="nucleotide sequence ID" value="NC_000913.3"/>
</dbReference>
<dbReference type="RefSeq" id="WP_001300779.1">
    <property type="nucleotide sequence ID" value="NZ_STEB01000015.1"/>
</dbReference>
<dbReference type="SMR" id="P31453"/>
<dbReference type="BioGRID" id="4260806">
    <property type="interactions" value="105"/>
</dbReference>
<dbReference type="FunCoup" id="P31453">
    <property type="interactions" value="287"/>
</dbReference>
<dbReference type="IntAct" id="P31453">
    <property type="interactions" value="1"/>
</dbReference>
<dbReference type="STRING" id="511145.b3684"/>
<dbReference type="PaxDb" id="511145-b3684"/>
<dbReference type="EnsemblBacteria" id="AAC76707">
    <property type="protein sequence ID" value="AAC76707"/>
    <property type="gene ID" value="b3684"/>
</dbReference>
<dbReference type="GeneID" id="948194"/>
<dbReference type="KEGG" id="ecj:JW3661"/>
<dbReference type="KEGG" id="eco:b3684"/>
<dbReference type="KEGG" id="ecoc:C3026_19975"/>
<dbReference type="PATRIC" id="fig|511145.12.peg.3806"/>
<dbReference type="EchoBASE" id="EB1662"/>
<dbReference type="eggNOG" id="COG2188">
    <property type="taxonomic scope" value="Bacteria"/>
</dbReference>
<dbReference type="HOGENOM" id="CLU_063236_5_0_6"/>
<dbReference type="InParanoid" id="P31453"/>
<dbReference type="OMA" id="IRMRGDR"/>
<dbReference type="OrthoDB" id="6626198at2"/>
<dbReference type="PhylomeDB" id="P31453"/>
<dbReference type="BioCyc" id="EcoCyc:EG11711-MONOMER"/>
<dbReference type="PRO" id="PR:P31453"/>
<dbReference type="Proteomes" id="UP000000625">
    <property type="component" value="Chromosome"/>
</dbReference>
<dbReference type="GO" id="GO:0003677">
    <property type="term" value="F:DNA binding"/>
    <property type="evidence" value="ECO:0007669"/>
    <property type="project" value="UniProtKB-KW"/>
</dbReference>
<dbReference type="GO" id="GO:0003700">
    <property type="term" value="F:DNA-binding transcription factor activity"/>
    <property type="evidence" value="ECO:0007669"/>
    <property type="project" value="InterPro"/>
</dbReference>
<dbReference type="GO" id="GO:0045892">
    <property type="term" value="P:negative regulation of DNA-templated transcription"/>
    <property type="evidence" value="ECO:0000318"/>
    <property type="project" value="GO_Central"/>
</dbReference>
<dbReference type="CDD" id="cd07377">
    <property type="entry name" value="WHTH_GntR"/>
    <property type="match status" value="1"/>
</dbReference>
<dbReference type="Gene3D" id="3.40.1410.10">
    <property type="entry name" value="Chorismate lyase-like"/>
    <property type="match status" value="1"/>
</dbReference>
<dbReference type="Gene3D" id="1.10.10.10">
    <property type="entry name" value="Winged helix-like DNA-binding domain superfamily/Winged helix DNA-binding domain"/>
    <property type="match status" value="1"/>
</dbReference>
<dbReference type="InterPro" id="IPR050679">
    <property type="entry name" value="Bact_HTH_transcr_reg"/>
</dbReference>
<dbReference type="InterPro" id="IPR028978">
    <property type="entry name" value="Chorismate_lyase_/UTRA_dom_sf"/>
</dbReference>
<dbReference type="InterPro" id="IPR000524">
    <property type="entry name" value="Tscrpt_reg_HTH_GntR"/>
</dbReference>
<dbReference type="InterPro" id="IPR011663">
    <property type="entry name" value="UTRA"/>
</dbReference>
<dbReference type="InterPro" id="IPR036388">
    <property type="entry name" value="WH-like_DNA-bd_sf"/>
</dbReference>
<dbReference type="InterPro" id="IPR036390">
    <property type="entry name" value="WH_DNA-bd_sf"/>
</dbReference>
<dbReference type="PANTHER" id="PTHR44846">
    <property type="entry name" value="MANNOSYL-D-GLYCERATE TRANSPORT/METABOLISM SYSTEM REPRESSOR MNGR-RELATED"/>
    <property type="match status" value="1"/>
</dbReference>
<dbReference type="PANTHER" id="PTHR44846:SF1">
    <property type="entry name" value="MANNOSYL-D-GLYCERATE TRANSPORT_METABOLISM SYSTEM REPRESSOR MNGR-RELATED"/>
    <property type="match status" value="1"/>
</dbReference>
<dbReference type="Pfam" id="PF00392">
    <property type="entry name" value="GntR"/>
    <property type="match status" value="1"/>
</dbReference>
<dbReference type="Pfam" id="PF07702">
    <property type="entry name" value="UTRA"/>
    <property type="match status" value="1"/>
</dbReference>
<dbReference type="PRINTS" id="PR00035">
    <property type="entry name" value="HTHGNTR"/>
</dbReference>
<dbReference type="SMART" id="SM00345">
    <property type="entry name" value="HTH_GNTR"/>
    <property type="match status" value="1"/>
</dbReference>
<dbReference type="SMART" id="SM00866">
    <property type="entry name" value="UTRA"/>
    <property type="match status" value="1"/>
</dbReference>
<dbReference type="SUPFAM" id="SSF64288">
    <property type="entry name" value="Chorismate lyase-like"/>
    <property type="match status" value="1"/>
</dbReference>
<dbReference type="SUPFAM" id="SSF46785">
    <property type="entry name" value="Winged helix' DNA-binding domain"/>
    <property type="match status" value="1"/>
</dbReference>
<dbReference type="PROSITE" id="PS50949">
    <property type="entry name" value="HTH_GNTR"/>
    <property type="match status" value="1"/>
</dbReference>
<accession>P31453</accession>
<accession>Q2M7Z6</accession>
<feature type="chain" id="PRO_0000050681" description="Uncharacterized HTH-type transcriptional regulator YidP">
    <location>
        <begin position="1"/>
        <end position="238"/>
    </location>
</feature>
<feature type="domain" description="HTH gntR-type" evidence="1">
    <location>
        <begin position="1"/>
        <end position="68"/>
    </location>
</feature>
<feature type="DNA-binding region" description="H-T-H motif" evidence="1">
    <location>
        <begin position="28"/>
        <end position="47"/>
    </location>
</feature>
<organism>
    <name type="scientific">Escherichia coli (strain K12)</name>
    <dbReference type="NCBI Taxonomy" id="83333"/>
    <lineage>
        <taxon>Bacteria</taxon>
        <taxon>Pseudomonadati</taxon>
        <taxon>Pseudomonadota</taxon>
        <taxon>Gammaproteobacteria</taxon>
        <taxon>Enterobacterales</taxon>
        <taxon>Enterobacteriaceae</taxon>
        <taxon>Escherichia</taxon>
    </lineage>
</organism>
<reference key="1">
    <citation type="journal article" date="1993" name="Genomics">
        <title>DNA sequence and analysis of 136 kilobases of the Escherichia coli genome: organizational symmetry around the origin of replication.</title>
        <authorList>
            <person name="Burland V.D."/>
            <person name="Plunkett G. III"/>
            <person name="Daniels D.L."/>
            <person name="Blattner F.R."/>
        </authorList>
    </citation>
    <scope>NUCLEOTIDE SEQUENCE [LARGE SCALE GENOMIC DNA]</scope>
    <source>
        <strain>K12 / MG1655 / ATCC 47076</strain>
    </source>
</reference>
<reference key="2">
    <citation type="journal article" date="1997" name="Science">
        <title>The complete genome sequence of Escherichia coli K-12.</title>
        <authorList>
            <person name="Blattner F.R."/>
            <person name="Plunkett G. III"/>
            <person name="Bloch C.A."/>
            <person name="Perna N.T."/>
            <person name="Burland V."/>
            <person name="Riley M."/>
            <person name="Collado-Vides J."/>
            <person name="Glasner J.D."/>
            <person name="Rode C.K."/>
            <person name="Mayhew G.F."/>
            <person name="Gregor J."/>
            <person name="Davis N.W."/>
            <person name="Kirkpatrick H.A."/>
            <person name="Goeden M.A."/>
            <person name="Rose D.J."/>
            <person name="Mau B."/>
            <person name="Shao Y."/>
        </authorList>
    </citation>
    <scope>NUCLEOTIDE SEQUENCE [LARGE SCALE GENOMIC DNA]</scope>
    <source>
        <strain>K12 / MG1655 / ATCC 47076</strain>
    </source>
</reference>
<reference key="3">
    <citation type="journal article" date="2006" name="Mol. Syst. Biol.">
        <title>Highly accurate genome sequences of Escherichia coli K-12 strains MG1655 and W3110.</title>
        <authorList>
            <person name="Hayashi K."/>
            <person name="Morooka N."/>
            <person name="Yamamoto Y."/>
            <person name="Fujita K."/>
            <person name="Isono K."/>
            <person name="Choi S."/>
            <person name="Ohtsubo E."/>
            <person name="Baba T."/>
            <person name="Wanner B.L."/>
            <person name="Mori H."/>
            <person name="Horiuchi T."/>
        </authorList>
    </citation>
    <scope>NUCLEOTIDE SEQUENCE [LARGE SCALE GENOMIC DNA]</scope>
    <source>
        <strain>K12 / W3110 / ATCC 27325 / DSM 5911</strain>
    </source>
</reference>
<keyword id="KW-0238">DNA-binding</keyword>
<keyword id="KW-1185">Reference proteome</keyword>
<keyword id="KW-0804">Transcription</keyword>
<keyword id="KW-0805">Transcription regulation</keyword>
<evidence type="ECO:0000255" key="1">
    <source>
        <dbReference type="PROSITE-ProRule" id="PRU00307"/>
    </source>
</evidence>